<organism>
    <name type="scientific">Homo sapiens</name>
    <name type="common">Human</name>
    <dbReference type="NCBI Taxonomy" id="9606"/>
    <lineage>
        <taxon>Eukaryota</taxon>
        <taxon>Metazoa</taxon>
        <taxon>Chordata</taxon>
        <taxon>Craniata</taxon>
        <taxon>Vertebrata</taxon>
        <taxon>Euteleostomi</taxon>
        <taxon>Mammalia</taxon>
        <taxon>Eutheria</taxon>
        <taxon>Euarchontoglires</taxon>
        <taxon>Primates</taxon>
        <taxon>Haplorrhini</taxon>
        <taxon>Catarrhini</taxon>
        <taxon>Hominidae</taxon>
        <taxon>Homo</taxon>
    </lineage>
</organism>
<protein>
    <recommendedName>
        <fullName>Olfactory receptor 6B1</fullName>
    </recommendedName>
    <alternativeName>
        <fullName>Olfactory receptor 7-3</fullName>
        <shortName>OR7-3</shortName>
    </alternativeName>
    <alternativeName>
        <fullName>Olfactory receptor OR7-9</fullName>
    </alternativeName>
</protein>
<evidence type="ECO:0000255" key="1"/>
<evidence type="ECO:0000255" key="2">
    <source>
        <dbReference type="PROSITE-ProRule" id="PRU00521"/>
    </source>
</evidence>
<evidence type="ECO:0000305" key="3"/>
<gene>
    <name type="primary">OR6B1</name>
</gene>
<name>OR6B1_HUMAN</name>
<dbReference type="EMBL" id="AC004853">
    <property type="status" value="NOT_ANNOTATED_CDS"/>
    <property type="molecule type" value="Genomic_DNA"/>
</dbReference>
<dbReference type="EMBL" id="CH236959">
    <property type="protein sequence ID" value="EAL23796.1"/>
    <property type="status" value="ALT_SEQ"/>
    <property type="molecule type" value="Genomic_DNA"/>
</dbReference>
<dbReference type="EMBL" id="BC137042">
    <property type="protein sequence ID" value="AAI37043.1"/>
    <property type="molecule type" value="mRNA"/>
</dbReference>
<dbReference type="EMBL" id="BC137047">
    <property type="protein sequence ID" value="AAI37048.1"/>
    <property type="molecule type" value="mRNA"/>
</dbReference>
<dbReference type="EMBL" id="AF399605">
    <property type="protein sequence ID" value="AAK95090.1"/>
    <property type="molecule type" value="Genomic_DNA"/>
</dbReference>
<dbReference type="EMBL" id="BK004216">
    <property type="protein sequence ID" value="DAA04614.1"/>
    <property type="molecule type" value="Genomic_DNA"/>
</dbReference>
<dbReference type="CCDS" id="CCDS43667.1"/>
<dbReference type="RefSeq" id="NP_001005281.1">
    <property type="nucleotide sequence ID" value="NM_001005281.3"/>
</dbReference>
<dbReference type="SMR" id="O95007"/>
<dbReference type="BioGRID" id="126443">
    <property type="interactions" value="15"/>
</dbReference>
<dbReference type="FunCoup" id="O95007">
    <property type="interactions" value="484"/>
</dbReference>
<dbReference type="IntAct" id="O95007">
    <property type="interactions" value="7"/>
</dbReference>
<dbReference type="STRING" id="9606.ENSP00000492907"/>
<dbReference type="GlyCosmos" id="O95007">
    <property type="glycosylation" value="1 site, No reported glycans"/>
</dbReference>
<dbReference type="GlyGen" id="O95007">
    <property type="glycosylation" value="1 site"/>
</dbReference>
<dbReference type="iPTMnet" id="O95007"/>
<dbReference type="PhosphoSitePlus" id="O95007"/>
<dbReference type="BioMuta" id="OR6B1"/>
<dbReference type="PaxDb" id="9606-ENSP00000386151"/>
<dbReference type="PeptideAtlas" id="O95007"/>
<dbReference type="Antibodypedia" id="64075">
    <property type="antibodies" value="16 antibodies from 11 providers"/>
</dbReference>
<dbReference type="DNASU" id="135946"/>
<dbReference type="Ensembl" id="ENST00000408922.3">
    <property type="protein sequence ID" value="ENSP00000386151.2"/>
    <property type="gene ID" value="ENSG00000221813.4"/>
</dbReference>
<dbReference type="Ensembl" id="ENST00000641698.1">
    <property type="protein sequence ID" value="ENSP00000492907.1"/>
    <property type="gene ID" value="ENSG00000221813.4"/>
</dbReference>
<dbReference type="Ensembl" id="ENST00000642360.1">
    <property type="protein sequence ID" value="ENSP00000496557.1"/>
    <property type="gene ID" value="ENSG00000284939.1"/>
</dbReference>
<dbReference type="Ensembl" id="ENST00000647270.1">
    <property type="protein sequence ID" value="ENSP00000494805.1"/>
    <property type="gene ID" value="ENSG00000284939.1"/>
</dbReference>
<dbReference type="GeneID" id="135946"/>
<dbReference type="KEGG" id="hsa:135946"/>
<dbReference type="MANE-Select" id="ENST00000641698.1">
    <property type="protein sequence ID" value="ENSP00000492907.1"/>
    <property type="RefSeq nucleotide sequence ID" value="NM_001005281.3"/>
    <property type="RefSeq protein sequence ID" value="NP_001005281.1"/>
</dbReference>
<dbReference type="UCSC" id="uc003wdt.2">
    <property type="organism name" value="human"/>
</dbReference>
<dbReference type="AGR" id="HGNC:8354"/>
<dbReference type="CTD" id="135946"/>
<dbReference type="GeneCards" id="OR6B1"/>
<dbReference type="HGNC" id="HGNC:8354">
    <property type="gene designation" value="OR6B1"/>
</dbReference>
<dbReference type="HPA" id="ENSG00000221813">
    <property type="expression patterns" value="Not detected"/>
</dbReference>
<dbReference type="neXtProt" id="NX_O95007"/>
<dbReference type="PharmGKB" id="PA32576"/>
<dbReference type="VEuPathDB" id="HostDB:ENSG00000221813"/>
<dbReference type="eggNOG" id="ENOG502QVH7">
    <property type="taxonomic scope" value="Eukaryota"/>
</dbReference>
<dbReference type="GeneTree" id="ENSGT01120000271873"/>
<dbReference type="HOGENOM" id="CLU_012526_1_0_1"/>
<dbReference type="InParanoid" id="O95007"/>
<dbReference type="OMA" id="ISLMCTE"/>
<dbReference type="OrthoDB" id="9419183at2759"/>
<dbReference type="PAN-GO" id="O95007">
    <property type="GO annotations" value="0 GO annotations based on evolutionary models"/>
</dbReference>
<dbReference type="PhylomeDB" id="O95007"/>
<dbReference type="TreeFam" id="TF337475"/>
<dbReference type="PathwayCommons" id="O95007"/>
<dbReference type="Reactome" id="R-HSA-9752946">
    <property type="pathway name" value="Expression and translocation of olfactory receptors"/>
</dbReference>
<dbReference type="SignaLink" id="O95007"/>
<dbReference type="BioGRID-ORCS" id="135946">
    <property type="hits" value="10 hits in 749 CRISPR screens"/>
</dbReference>
<dbReference type="ChiTaRS" id="OR6B1">
    <property type="organism name" value="human"/>
</dbReference>
<dbReference type="GeneWiki" id="OR6B1"/>
<dbReference type="GenomeRNAi" id="135946"/>
<dbReference type="Pharos" id="O95007">
    <property type="development level" value="Tdark"/>
</dbReference>
<dbReference type="PRO" id="PR:O95007"/>
<dbReference type="Proteomes" id="UP000005640">
    <property type="component" value="Chromosome 7"/>
</dbReference>
<dbReference type="RNAct" id="O95007">
    <property type="molecule type" value="protein"/>
</dbReference>
<dbReference type="Bgee" id="ENSG00000221813">
    <property type="expression patterns" value="Expressed in placenta and 5 other cell types or tissues"/>
</dbReference>
<dbReference type="GO" id="GO:0005886">
    <property type="term" value="C:plasma membrane"/>
    <property type="evidence" value="ECO:0000318"/>
    <property type="project" value="GO_Central"/>
</dbReference>
<dbReference type="GO" id="GO:0004930">
    <property type="term" value="F:G protein-coupled receptor activity"/>
    <property type="evidence" value="ECO:0007669"/>
    <property type="project" value="UniProtKB-KW"/>
</dbReference>
<dbReference type="GO" id="GO:0004984">
    <property type="term" value="F:olfactory receptor activity"/>
    <property type="evidence" value="ECO:0000318"/>
    <property type="project" value="GO_Central"/>
</dbReference>
<dbReference type="GO" id="GO:0050911">
    <property type="term" value="P:detection of chemical stimulus involved in sensory perception of smell"/>
    <property type="evidence" value="ECO:0000318"/>
    <property type="project" value="GO_Central"/>
</dbReference>
<dbReference type="CDD" id="cd15224">
    <property type="entry name" value="7tmA_OR6B-like"/>
    <property type="match status" value="1"/>
</dbReference>
<dbReference type="FunFam" id="1.20.1070.10:FF:000001">
    <property type="entry name" value="Olfactory receptor"/>
    <property type="match status" value="1"/>
</dbReference>
<dbReference type="Gene3D" id="1.20.1070.10">
    <property type="entry name" value="Rhodopsin 7-helix transmembrane proteins"/>
    <property type="match status" value="1"/>
</dbReference>
<dbReference type="InterPro" id="IPR000276">
    <property type="entry name" value="GPCR_Rhodpsn"/>
</dbReference>
<dbReference type="InterPro" id="IPR017452">
    <property type="entry name" value="GPCR_Rhodpsn_7TM"/>
</dbReference>
<dbReference type="InterPro" id="IPR000725">
    <property type="entry name" value="Olfact_rcpt"/>
</dbReference>
<dbReference type="InterPro" id="IPR050939">
    <property type="entry name" value="Olfactory_GPCR1"/>
</dbReference>
<dbReference type="PANTHER" id="PTHR24242">
    <property type="entry name" value="G-PROTEIN COUPLED RECEPTOR"/>
    <property type="match status" value="1"/>
</dbReference>
<dbReference type="PANTHER" id="PTHR24242:SF253">
    <property type="entry name" value="OLFACTORY RECEPTOR-RELATED"/>
    <property type="match status" value="1"/>
</dbReference>
<dbReference type="Pfam" id="PF13853">
    <property type="entry name" value="7tm_4"/>
    <property type="match status" value="1"/>
</dbReference>
<dbReference type="PRINTS" id="PR00237">
    <property type="entry name" value="GPCRRHODOPSN"/>
</dbReference>
<dbReference type="PRINTS" id="PR00245">
    <property type="entry name" value="OLFACTORYR"/>
</dbReference>
<dbReference type="SUPFAM" id="SSF81321">
    <property type="entry name" value="Family A G protein-coupled receptor-like"/>
    <property type="match status" value="1"/>
</dbReference>
<dbReference type="PROSITE" id="PS00237">
    <property type="entry name" value="G_PROTEIN_RECEP_F1_1"/>
    <property type="match status" value="1"/>
</dbReference>
<dbReference type="PROSITE" id="PS50262">
    <property type="entry name" value="G_PROTEIN_RECEP_F1_2"/>
    <property type="match status" value="1"/>
</dbReference>
<sequence>MELENQTRVTKFILVGFPGSLSMRAAMFLIFLVAYILTVAENVIIILLVLQNRPLHKPMYFFLANLSFLETWYISVTVPKLLFSFWSVNNSISFTLCMIQLYFFIALMCTECVLLAAMAYDRYVAICRPLHYPTIMSHGLCFRLALGSWAIGFGISLAKIYFISCLSFCGPNVINHFFCDISPVLNLSCTDMSITELVDFILALVIFLFPLFITVLSYGCILATILCMPTGKQKAFSTCASHLVVVTIFYSAIIFMYARPRVIHAFNMNKIISIFYAIVTPSLNPFIYCLRNREVKEALKKLAYCQASRSD</sequence>
<keyword id="KW-1003">Cell membrane</keyword>
<keyword id="KW-1015">Disulfide bond</keyword>
<keyword id="KW-0297">G-protein coupled receptor</keyword>
<keyword id="KW-0325">Glycoprotein</keyword>
<keyword id="KW-0472">Membrane</keyword>
<keyword id="KW-0552">Olfaction</keyword>
<keyword id="KW-0675">Receptor</keyword>
<keyword id="KW-1185">Reference proteome</keyword>
<keyword id="KW-0716">Sensory transduction</keyword>
<keyword id="KW-0807">Transducer</keyword>
<keyword id="KW-0812">Transmembrane</keyword>
<keyword id="KW-1133">Transmembrane helix</keyword>
<proteinExistence type="evidence at protein level"/>
<comment type="function">
    <text evidence="3">Odorant receptor.</text>
</comment>
<comment type="interaction">
    <interactant intactId="EBI-12176191">
        <id>O95007</id>
    </interactant>
    <interactant intactId="EBI-748171">
        <id>O43186</id>
        <label>CRX</label>
    </interactant>
    <organismsDiffer>false</organismsDiffer>
    <experiments>3</experiments>
</comment>
<comment type="interaction">
    <interactant intactId="EBI-12176191">
        <id>O95007</id>
    </interactant>
    <interactant intactId="EBI-6509505">
        <id>Q0VD86</id>
        <label>INCA1</label>
    </interactant>
    <organismsDiffer>false</organismsDiffer>
    <experiments>3</experiments>
</comment>
<comment type="interaction">
    <interactant intactId="EBI-12176191">
        <id>O95007</id>
    </interactant>
    <interactant intactId="EBI-16439278">
        <id>Q6FHY5</id>
        <label>MEOX2</label>
    </interactant>
    <organismsDiffer>false</organismsDiffer>
    <experiments>3</experiments>
</comment>
<comment type="interaction">
    <interactant intactId="EBI-12176191">
        <id>O95007</id>
    </interactant>
    <interactant intactId="EBI-11139477">
        <id>Q96N21</id>
        <label>TEPSIN</label>
    </interactant>
    <organismsDiffer>false</organismsDiffer>
    <experiments>3</experiments>
</comment>
<comment type="subcellular location">
    <subcellularLocation>
        <location>Cell membrane</location>
        <topology>Multi-pass membrane protein</topology>
    </subcellularLocation>
</comment>
<comment type="similarity">
    <text evidence="2">Belongs to the G-protein coupled receptor 1 family.</text>
</comment>
<comment type="online information" name="Human Olfactory Receptor Data Exploratorium (HORDE)">
    <link uri="http://genome.weizmann.ac.il/horde/card/index/symbol:OR6B1"/>
</comment>
<reference key="1">
    <citation type="journal article" date="2003" name="Nature">
        <title>The DNA sequence of human chromosome 7.</title>
        <authorList>
            <person name="Hillier L.W."/>
            <person name="Fulton R.S."/>
            <person name="Fulton L.A."/>
            <person name="Graves T.A."/>
            <person name="Pepin K.H."/>
            <person name="Wagner-McPherson C."/>
            <person name="Layman D."/>
            <person name="Maas J."/>
            <person name="Jaeger S."/>
            <person name="Walker R."/>
            <person name="Wylie K."/>
            <person name="Sekhon M."/>
            <person name="Becker M.C."/>
            <person name="O'Laughlin M.D."/>
            <person name="Schaller M.E."/>
            <person name="Fewell G.A."/>
            <person name="Delehaunty K.D."/>
            <person name="Miner T.L."/>
            <person name="Nash W.E."/>
            <person name="Cordes M."/>
            <person name="Du H."/>
            <person name="Sun H."/>
            <person name="Edwards J."/>
            <person name="Bradshaw-Cordum H."/>
            <person name="Ali J."/>
            <person name="Andrews S."/>
            <person name="Isak A."/>
            <person name="Vanbrunt A."/>
            <person name="Nguyen C."/>
            <person name="Du F."/>
            <person name="Lamar B."/>
            <person name="Courtney L."/>
            <person name="Kalicki J."/>
            <person name="Ozersky P."/>
            <person name="Bielicki L."/>
            <person name="Scott K."/>
            <person name="Holmes A."/>
            <person name="Harkins R."/>
            <person name="Harris A."/>
            <person name="Strong C.M."/>
            <person name="Hou S."/>
            <person name="Tomlinson C."/>
            <person name="Dauphin-Kohlberg S."/>
            <person name="Kozlowicz-Reilly A."/>
            <person name="Leonard S."/>
            <person name="Rohlfing T."/>
            <person name="Rock S.M."/>
            <person name="Tin-Wollam A.-M."/>
            <person name="Abbott A."/>
            <person name="Minx P."/>
            <person name="Maupin R."/>
            <person name="Strowmatt C."/>
            <person name="Latreille P."/>
            <person name="Miller N."/>
            <person name="Johnson D."/>
            <person name="Murray J."/>
            <person name="Woessner J.P."/>
            <person name="Wendl M.C."/>
            <person name="Yang S.-P."/>
            <person name="Schultz B.R."/>
            <person name="Wallis J.W."/>
            <person name="Spieth J."/>
            <person name="Bieri T.A."/>
            <person name="Nelson J.O."/>
            <person name="Berkowicz N."/>
            <person name="Wohldmann P.E."/>
            <person name="Cook L.L."/>
            <person name="Hickenbotham M.T."/>
            <person name="Eldred J."/>
            <person name="Williams D."/>
            <person name="Bedell J.A."/>
            <person name="Mardis E.R."/>
            <person name="Clifton S.W."/>
            <person name="Chissoe S.L."/>
            <person name="Marra M.A."/>
            <person name="Raymond C."/>
            <person name="Haugen E."/>
            <person name="Gillett W."/>
            <person name="Zhou Y."/>
            <person name="James R."/>
            <person name="Phelps K."/>
            <person name="Iadanoto S."/>
            <person name="Bubb K."/>
            <person name="Simms E."/>
            <person name="Levy R."/>
            <person name="Clendenning J."/>
            <person name="Kaul R."/>
            <person name="Kent W.J."/>
            <person name="Furey T.S."/>
            <person name="Baertsch R.A."/>
            <person name="Brent M.R."/>
            <person name="Keibler E."/>
            <person name="Flicek P."/>
            <person name="Bork P."/>
            <person name="Suyama M."/>
            <person name="Bailey J.A."/>
            <person name="Portnoy M.E."/>
            <person name="Torrents D."/>
            <person name="Chinwalla A.T."/>
            <person name="Gish W.R."/>
            <person name="Eddy S.R."/>
            <person name="McPherson J.D."/>
            <person name="Olson M.V."/>
            <person name="Eichler E.E."/>
            <person name="Green E.D."/>
            <person name="Waterston R.H."/>
            <person name="Wilson R.K."/>
        </authorList>
    </citation>
    <scope>NUCLEOTIDE SEQUENCE [LARGE SCALE GENOMIC DNA]</scope>
</reference>
<reference key="2">
    <citation type="journal article" date="2003" name="Science">
        <title>Human chromosome 7: DNA sequence and biology.</title>
        <authorList>
            <person name="Scherer S.W."/>
            <person name="Cheung J."/>
            <person name="MacDonald J.R."/>
            <person name="Osborne L.R."/>
            <person name="Nakabayashi K."/>
            <person name="Herbrick J.-A."/>
            <person name="Carson A.R."/>
            <person name="Parker-Katiraee L."/>
            <person name="Skaug J."/>
            <person name="Khaja R."/>
            <person name="Zhang J."/>
            <person name="Hudek A.K."/>
            <person name="Li M."/>
            <person name="Haddad M."/>
            <person name="Duggan G.E."/>
            <person name="Fernandez B.A."/>
            <person name="Kanematsu E."/>
            <person name="Gentles S."/>
            <person name="Christopoulos C.C."/>
            <person name="Choufani S."/>
            <person name="Kwasnicka D."/>
            <person name="Zheng X.H."/>
            <person name="Lai Z."/>
            <person name="Nusskern D.R."/>
            <person name="Zhang Q."/>
            <person name="Gu Z."/>
            <person name="Lu F."/>
            <person name="Zeesman S."/>
            <person name="Nowaczyk M.J."/>
            <person name="Teshima I."/>
            <person name="Chitayat D."/>
            <person name="Shuman C."/>
            <person name="Weksberg R."/>
            <person name="Zackai E.H."/>
            <person name="Grebe T.A."/>
            <person name="Cox S.R."/>
            <person name="Kirkpatrick S.J."/>
            <person name="Rahman N."/>
            <person name="Friedman J.M."/>
            <person name="Heng H.H.Q."/>
            <person name="Pelicci P.G."/>
            <person name="Lo-Coco F."/>
            <person name="Belloni E."/>
            <person name="Shaffer L.G."/>
            <person name="Pober B."/>
            <person name="Morton C.C."/>
            <person name="Gusella J.F."/>
            <person name="Bruns G.A.P."/>
            <person name="Korf B.R."/>
            <person name="Quade B.J."/>
            <person name="Ligon A.H."/>
            <person name="Ferguson H."/>
            <person name="Higgins A.W."/>
            <person name="Leach N.T."/>
            <person name="Herrick S.R."/>
            <person name="Lemyre E."/>
            <person name="Farra C.G."/>
            <person name="Kim H.-G."/>
            <person name="Summers A.M."/>
            <person name="Gripp K.W."/>
            <person name="Roberts W."/>
            <person name="Szatmari P."/>
            <person name="Winsor E.J.T."/>
            <person name="Grzeschik K.-H."/>
            <person name="Teebi A."/>
            <person name="Minassian B.A."/>
            <person name="Kere J."/>
            <person name="Armengol L."/>
            <person name="Pujana M.A."/>
            <person name="Estivill X."/>
            <person name="Wilson M.D."/>
            <person name="Koop B.F."/>
            <person name="Tosi S."/>
            <person name="Moore G.E."/>
            <person name="Boright A.P."/>
            <person name="Zlotorynski E."/>
            <person name="Kerem B."/>
            <person name="Kroisel P.M."/>
            <person name="Petek E."/>
            <person name="Oscier D.G."/>
            <person name="Mould S.J."/>
            <person name="Doehner H."/>
            <person name="Doehner K."/>
            <person name="Rommens J.M."/>
            <person name="Vincent J.B."/>
            <person name="Venter J.C."/>
            <person name="Li P.W."/>
            <person name="Mural R.J."/>
            <person name="Adams M.D."/>
            <person name="Tsui L.-C."/>
        </authorList>
    </citation>
    <scope>NUCLEOTIDE SEQUENCE [LARGE SCALE GENOMIC DNA]</scope>
</reference>
<reference key="3">
    <citation type="journal article" date="2004" name="Genome Res.">
        <title>The status, quality, and expansion of the NIH full-length cDNA project: the Mammalian Gene Collection (MGC).</title>
        <authorList>
            <consortium name="The MGC Project Team"/>
        </authorList>
    </citation>
    <scope>NUCLEOTIDE SEQUENCE [LARGE SCALE MRNA]</scope>
    <source>
        <tissue>Testis</tissue>
    </source>
</reference>
<reference key="4">
    <citation type="journal article" date="2002" name="Genomics">
        <title>DEFOG: a practical scheme for deciphering families of genes.</title>
        <authorList>
            <person name="Fuchs T."/>
            <person name="Malecova B."/>
            <person name="Linhart C."/>
            <person name="Sharan R."/>
            <person name="Khen M."/>
            <person name="Herwig R."/>
            <person name="Shmulevich D."/>
            <person name="Elkon R."/>
            <person name="Steinfath M."/>
            <person name="O'Brien J.K."/>
            <person name="Radelof U."/>
            <person name="Lehrach H."/>
            <person name="Lancet D."/>
            <person name="Shamir R."/>
        </authorList>
    </citation>
    <scope>NUCLEOTIDE SEQUENCE [GENOMIC DNA] OF 68-282</scope>
</reference>
<reference key="5">
    <citation type="journal article" date="2004" name="Proc. Natl. Acad. Sci. U.S.A.">
        <title>The human olfactory receptor gene family.</title>
        <authorList>
            <person name="Malnic B."/>
            <person name="Godfrey P.A."/>
            <person name="Buck L.B."/>
        </authorList>
    </citation>
    <scope>IDENTIFICATION</scope>
</reference>
<reference key="6">
    <citation type="journal article" date="2004" name="Proc. Natl. Acad. Sci. U.S.A.">
        <authorList>
            <person name="Malnic B."/>
            <person name="Godfrey P.A."/>
            <person name="Buck L.B."/>
        </authorList>
    </citation>
    <scope>ERRATUM OF PUBMED:14983052</scope>
</reference>
<feature type="chain" id="PRO_0000150620" description="Olfactory receptor 6B1">
    <location>
        <begin position="1"/>
        <end position="311"/>
    </location>
</feature>
<feature type="topological domain" description="Extracellular" evidence="1">
    <location>
        <begin position="1"/>
        <end position="25"/>
    </location>
</feature>
<feature type="transmembrane region" description="Helical; Name=1" evidence="1">
    <location>
        <begin position="26"/>
        <end position="46"/>
    </location>
</feature>
<feature type="topological domain" description="Cytoplasmic" evidence="1">
    <location>
        <begin position="47"/>
        <end position="54"/>
    </location>
</feature>
<feature type="transmembrane region" description="Helical; Name=2" evidence="1">
    <location>
        <begin position="55"/>
        <end position="75"/>
    </location>
</feature>
<feature type="topological domain" description="Extracellular" evidence="1">
    <location>
        <begin position="76"/>
        <end position="99"/>
    </location>
</feature>
<feature type="transmembrane region" description="Helical; Name=3" evidence="1">
    <location>
        <begin position="100"/>
        <end position="120"/>
    </location>
</feature>
<feature type="topological domain" description="Cytoplasmic" evidence="1">
    <location>
        <begin position="121"/>
        <end position="139"/>
    </location>
</feature>
<feature type="transmembrane region" description="Helical; Name=4" evidence="1">
    <location>
        <begin position="140"/>
        <end position="160"/>
    </location>
</feature>
<feature type="topological domain" description="Extracellular" evidence="1">
    <location>
        <begin position="161"/>
        <end position="196"/>
    </location>
</feature>
<feature type="transmembrane region" description="Helical; Name=5" evidence="1">
    <location>
        <begin position="197"/>
        <end position="217"/>
    </location>
</feature>
<feature type="topological domain" description="Cytoplasmic" evidence="1">
    <location>
        <begin position="218"/>
        <end position="235"/>
    </location>
</feature>
<feature type="transmembrane region" description="Helical; Name=6" evidence="1">
    <location>
        <begin position="236"/>
        <end position="256"/>
    </location>
</feature>
<feature type="topological domain" description="Extracellular" evidence="1">
    <location>
        <begin position="257"/>
        <end position="269"/>
    </location>
</feature>
<feature type="transmembrane region" description="Helical; Name=7" evidence="1">
    <location>
        <begin position="270"/>
        <end position="290"/>
    </location>
</feature>
<feature type="topological domain" description="Cytoplasmic" evidence="1">
    <location>
        <begin position="291"/>
        <end position="311"/>
    </location>
</feature>
<feature type="glycosylation site" description="N-linked (GlcNAc...) asparagine" evidence="1">
    <location>
        <position position="5"/>
    </location>
</feature>
<feature type="disulfide bond" evidence="2">
    <location>
        <begin position="97"/>
        <end position="189"/>
    </location>
</feature>
<feature type="sequence variant" id="VAR_034238" description="In dbSNP:rs7787378.">
    <original>R</original>
    <variation>C</variation>
    <location>
        <position position="143"/>
    </location>
</feature>
<accession>O95007</accession>
<accession>A4D2G2</accession>
<accession>B9EH47</accession>
<accession>Q6IFP6</accession>
<accession>Q96R38</accession>